<sequence>MENSGKANKKDTHDGPPKEIKLPTSEALLDYQCQIKEDAVEQFMFQIKTLRKKNQKYHERNSRLKEEQIWHIRHLLKELSEEKAEGLPVVTREDVEEAMKEKWKFERDQEKNLRDMRMQISNAEKLFLEKLSEKEYWEEYKNVGSERHAKLITSLQNDINTVKENAEKMSEHYKITLEDTRKKIIKETLLQLDQKKEWATQNAVKLIDKGSYLEIWENDWLKKEVAIHRKEVEELKNAIHELEAENLVLIDQLSNCRLVDLKIPRRLYLTQAAGLEVPPEEMSLELPETHIEEKSELQPTEVESRDLMSSSDESTILHLSHENSIEDLQYVKIDKEENSGTEFGDTDMKYLLYEDEKDFKDYVNLGPLGVKLMSVESKKMPIHFQEKEIPVKLYKDVRSPESHITYKMMKSFL</sequence>
<keyword id="KW-0025">Alternative splicing</keyword>
<keyword id="KW-0175">Coiled coil</keyword>
<keyword id="KW-1267">Proteomics identification</keyword>
<keyword id="KW-1185">Reference proteome</keyword>
<feature type="chain" id="PRO_0000288881" description="Coiled-coil domain-containing protein 83">
    <location>
        <begin position="1"/>
        <end position="413"/>
    </location>
</feature>
<feature type="region of interest" description="Disordered" evidence="2">
    <location>
        <begin position="1"/>
        <end position="21"/>
    </location>
</feature>
<feature type="coiled-coil region" evidence="1">
    <location>
        <begin position="37"/>
        <end position="184"/>
    </location>
</feature>
<feature type="coiled-coil region" evidence="1">
    <location>
        <begin position="216"/>
        <end position="256"/>
    </location>
</feature>
<feature type="compositionally biased region" description="Basic and acidic residues" evidence="2">
    <location>
        <begin position="8"/>
        <end position="21"/>
    </location>
</feature>
<feature type="splice variant" id="VSP_025808" description="In isoform 3." evidence="4">
    <location>
        <begin position="1"/>
        <end position="43"/>
    </location>
</feature>
<feature type="splice variant" id="VSP_025809" description="In isoform 3." evidence="4">
    <location>
        <begin position="115"/>
        <end position="170"/>
    </location>
</feature>
<feature type="splice variant" id="VSP_025810" description="In isoform 2." evidence="3">
    <original>R</original>
    <variation>RYPVLHSCPTSNPRHLLLLPLESCLISARRCW</variation>
    <location>
        <position position="265"/>
    </location>
</feature>
<feature type="splice variant" id="VSP_025811" description="In isoform 3." evidence="4">
    <location>
        <position position="292"/>
    </location>
</feature>
<feature type="sequence variant" id="VAR_032525" description="In dbSNP:rs12362209.">
    <original>T</original>
    <variation>A</variation>
    <location>
        <position position="49"/>
    </location>
</feature>
<feature type="sequence conflict" description="In Ref. 4; AAH40280." evidence="5" ref="4">
    <original>I</original>
    <variation>T</variation>
    <location>
        <position position="227"/>
    </location>
</feature>
<organism>
    <name type="scientific">Homo sapiens</name>
    <name type="common">Human</name>
    <dbReference type="NCBI Taxonomy" id="9606"/>
    <lineage>
        <taxon>Eukaryota</taxon>
        <taxon>Metazoa</taxon>
        <taxon>Chordata</taxon>
        <taxon>Craniata</taxon>
        <taxon>Vertebrata</taxon>
        <taxon>Euteleostomi</taxon>
        <taxon>Mammalia</taxon>
        <taxon>Eutheria</taxon>
        <taxon>Euarchontoglires</taxon>
        <taxon>Primates</taxon>
        <taxon>Haplorrhini</taxon>
        <taxon>Catarrhini</taxon>
        <taxon>Hominidae</taxon>
        <taxon>Homo</taxon>
    </lineage>
</organism>
<protein>
    <recommendedName>
        <fullName>Coiled-coil domain-containing protein 83</fullName>
    </recommendedName>
</protein>
<accession>Q8IWF9</accession>
<accession>B2RA49</accession>
<accession>Q6X7T2</accession>
<accession>Q6ZVT5</accession>
<accession>Q8N9Y1</accession>
<gene>
    <name type="primary">CCDC83</name>
    <name type="ORF">HSD9</name>
</gene>
<reference key="1">
    <citation type="submission" date="2003-03" db="EMBL/GenBank/DDBJ databases">
        <title>A new spermatogenesis-related gene.</title>
        <authorList>
            <person name="Hu T.H."/>
            <person name="Miao S.Y."/>
            <person name="Zhang X.D."/>
            <person name="Qiao Y."/>
            <person name="Liang G."/>
            <person name="Wang L.F."/>
        </authorList>
    </citation>
    <scope>NUCLEOTIDE SEQUENCE [LARGE SCALE MRNA] (ISOFORM 3)</scope>
    <source>
        <tissue>Testis</tissue>
    </source>
</reference>
<reference key="2">
    <citation type="journal article" date="2004" name="Nat. Genet.">
        <title>Complete sequencing and characterization of 21,243 full-length human cDNAs.</title>
        <authorList>
            <person name="Ota T."/>
            <person name="Suzuki Y."/>
            <person name="Nishikawa T."/>
            <person name="Otsuki T."/>
            <person name="Sugiyama T."/>
            <person name="Irie R."/>
            <person name="Wakamatsu A."/>
            <person name="Hayashi K."/>
            <person name="Sato H."/>
            <person name="Nagai K."/>
            <person name="Kimura K."/>
            <person name="Makita H."/>
            <person name="Sekine M."/>
            <person name="Obayashi M."/>
            <person name="Nishi T."/>
            <person name="Shibahara T."/>
            <person name="Tanaka T."/>
            <person name="Ishii S."/>
            <person name="Yamamoto J."/>
            <person name="Saito K."/>
            <person name="Kawai Y."/>
            <person name="Isono Y."/>
            <person name="Nakamura Y."/>
            <person name="Nagahari K."/>
            <person name="Murakami K."/>
            <person name="Yasuda T."/>
            <person name="Iwayanagi T."/>
            <person name="Wagatsuma M."/>
            <person name="Shiratori A."/>
            <person name="Sudo H."/>
            <person name="Hosoiri T."/>
            <person name="Kaku Y."/>
            <person name="Kodaira H."/>
            <person name="Kondo H."/>
            <person name="Sugawara M."/>
            <person name="Takahashi M."/>
            <person name="Kanda K."/>
            <person name="Yokoi T."/>
            <person name="Furuya T."/>
            <person name="Kikkawa E."/>
            <person name="Omura Y."/>
            <person name="Abe K."/>
            <person name="Kamihara K."/>
            <person name="Katsuta N."/>
            <person name="Sato K."/>
            <person name="Tanikawa M."/>
            <person name="Yamazaki M."/>
            <person name="Ninomiya K."/>
            <person name="Ishibashi T."/>
            <person name="Yamashita H."/>
            <person name="Murakawa K."/>
            <person name="Fujimori K."/>
            <person name="Tanai H."/>
            <person name="Kimata M."/>
            <person name="Watanabe M."/>
            <person name="Hiraoka S."/>
            <person name="Chiba Y."/>
            <person name="Ishida S."/>
            <person name="Ono Y."/>
            <person name="Takiguchi S."/>
            <person name="Watanabe S."/>
            <person name="Yosida M."/>
            <person name="Hotuta T."/>
            <person name="Kusano J."/>
            <person name="Kanehori K."/>
            <person name="Takahashi-Fujii A."/>
            <person name="Hara H."/>
            <person name="Tanase T.-O."/>
            <person name="Nomura Y."/>
            <person name="Togiya S."/>
            <person name="Komai F."/>
            <person name="Hara R."/>
            <person name="Takeuchi K."/>
            <person name="Arita M."/>
            <person name="Imose N."/>
            <person name="Musashino K."/>
            <person name="Yuuki H."/>
            <person name="Oshima A."/>
            <person name="Sasaki N."/>
            <person name="Aotsuka S."/>
            <person name="Yoshikawa Y."/>
            <person name="Matsunawa H."/>
            <person name="Ichihara T."/>
            <person name="Shiohata N."/>
            <person name="Sano S."/>
            <person name="Moriya S."/>
            <person name="Momiyama H."/>
            <person name="Satoh N."/>
            <person name="Takami S."/>
            <person name="Terashima Y."/>
            <person name="Suzuki O."/>
            <person name="Nakagawa S."/>
            <person name="Senoh A."/>
            <person name="Mizoguchi H."/>
            <person name="Goto Y."/>
            <person name="Shimizu F."/>
            <person name="Wakebe H."/>
            <person name="Hishigaki H."/>
            <person name="Watanabe T."/>
            <person name="Sugiyama A."/>
            <person name="Takemoto M."/>
            <person name="Kawakami B."/>
            <person name="Yamazaki M."/>
            <person name="Watanabe K."/>
            <person name="Kumagai A."/>
            <person name="Itakura S."/>
            <person name="Fukuzumi Y."/>
            <person name="Fujimori Y."/>
            <person name="Komiyama M."/>
            <person name="Tashiro H."/>
            <person name="Tanigami A."/>
            <person name="Fujiwara T."/>
            <person name="Ono T."/>
            <person name="Yamada K."/>
            <person name="Fujii Y."/>
            <person name="Ozaki K."/>
            <person name="Hirao M."/>
            <person name="Ohmori Y."/>
            <person name="Kawabata A."/>
            <person name="Hikiji T."/>
            <person name="Kobatake N."/>
            <person name="Inagaki H."/>
            <person name="Ikema Y."/>
            <person name="Okamoto S."/>
            <person name="Okitani R."/>
            <person name="Kawakami T."/>
            <person name="Noguchi S."/>
            <person name="Itoh T."/>
            <person name="Shigeta K."/>
            <person name="Senba T."/>
            <person name="Matsumura K."/>
            <person name="Nakajima Y."/>
            <person name="Mizuno T."/>
            <person name="Morinaga M."/>
            <person name="Sasaki M."/>
            <person name="Togashi T."/>
            <person name="Oyama M."/>
            <person name="Hata H."/>
            <person name="Watanabe M."/>
            <person name="Komatsu T."/>
            <person name="Mizushima-Sugano J."/>
            <person name="Satoh T."/>
            <person name="Shirai Y."/>
            <person name="Takahashi Y."/>
            <person name="Nakagawa K."/>
            <person name="Okumura K."/>
            <person name="Nagase T."/>
            <person name="Nomura N."/>
            <person name="Kikuchi H."/>
            <person name="Masuho Y."/>
            <person name="Yamashita R."/>
            <person name="Nakai K."/>
            <person name="Yada T."/>
            <person name="Nakamura Y."/>
            <person name="Ohara O."/>
            <person name="Isogai T."/>
            <person name="Sugano S."/>
        </authorList>
    </citation>
    <scope>NUCLEOTIDE SEQUENCE [LARGE SCALE MRNA] (ISOFORMS 1 AND 2)</scope>
    <source>
        <tissue>Testis</tissue>
    </source>
</reference>
<reference key="3">
    <citation type="submission" date="2005-07" db="EMBL/GenBank/DDBJ databases">
        <authorList>
            <person name="Mural R.J."/>
            <person name="Istrail S."/>
            <person name="Sutton G.G."/>
            <person name="Florea L."/>
            <person name="Halpern A.L."/>
            <person name="Mobarry C.M."/>
            <person name="Lippert R."/>
            <person name="Walenz B."/>
            <person name="Shatkay H."/>
            <person name="Dew I."/>
            <person name="Miller J.R."/>
            <person name="Flanigan M.J."/>
            <person name="Edwards N.J."/>
            <person name="Bolanos R."/>
            <person name="Fasulo D."/>
            <person name="Halldorsson B.V."/>
            <person name="Hannenhalli S."/>
            <person name="Turner R."/>
            <person name="Yooseph S."/>
            <person name="Lu F."/>
            <person name="Nusskern D.R."/>
            <person name="Shue B.C."/>
            <person name="Zheng X.H."/>
            <person name="Zhong F."/>
            <person name="Delcher A.L."/>
            <person name="Huson D.H."/>
            <person name="Kravitz S.A."/>
            <person name="Mouchard L."/>
            <person name="Reinert K."/>
            <person name="Remington K.A."/>
            <person name="Clark A.G."/>
            <person name="Waterman M.S."/>
            <person name="Eichler E.E."/>
            <person name="Adams M.D."/>
            <person name="Hunkapiller M.W."/>
            <person name="Myers E.W."/>
            <person name="Venter J.C."/>
        </authorList>
    </citation>
    <scope>NUCLEOTIDE SEQUENCE [LARGE SCALE GENOMIC DNA]</scope>
</reference>
<reference key="4">
    <citation type="journal article" date="2004" name="Genome Res.">
        <title>The status, quality, and expansion of the NIH full-length cDNA project: the Mammalian Gene Collection (MGC).</title>
        <authorList>
            <consortium name="The MGC Project Team"/>
        </authorList>
    </citation>
    <scope>NUCLEOTIDE SEQUENCE [LARGE SCALE MRNA] (ISOFORM 1)</scope>
    <source>
        <tissue>Brain</tissue>
    </source>
</reference>
<comment type="interaction">
    <interactant intactId="EBI-19036308">
        <id>Q8IWF9</id>
    </interactant>
    <interactant intactId="EBI-7225287">
        <id>Q96MY7</id>
        <label>FAM161B</label>
    </interactant>
    <organismsDiffer>false</organismsDiffer>
    <experiments>3</experiments>
</comment>
<comment type="alternative products">
    <event type="alternative splicing"/>
    <isoform>
        <id>Q8IWF9-1</id>
        <name>1</name>
        <sequence type="displayed"/>
    </isoform>
    <isoform>
        <id>Q8IWF9-2</id>
        <name>2</name>
        <sequence type="described" ref="VSP_025810"/>
    </isoform>
    <isoform>
        <id>Q8IWF9-3</id>
        <name>3</name>
        <sequence type="described" ref="VSP_025808 VSP_025809 VSP_025811"/>
    </isoform>
</comment>
<comment type="sequence caution" evidence="5">
    <conflict type="frameshift">
        <sequence resource="EMBL-CDS" id="BAC04154"/>
    </conflict>
</comment>
<name>CCD83_HUMAN</name>
<proteinExistence type="evidence at protein level"/>
<dbReference type="EMBL" id="AY251167">
    <property type="protein sequence ID" value="AAP20064.1"/>
    <property type="molecule type" value="mRNA"/>
</dbReference>
<dbReference type="EMBL" id="AK093405">
    <property type="protein sequence ID" value="BAC04154.1"/>
    <property type="status" value="ALT_SEQ"/>
    <property type="molecule type" value="mRNA"/>
</dbReference>
<dbReference type="EMBL" id="AK124113">
    <property type="protein sequence ID" value="BAC85776.1"/>
    <property type="molecule type" value="mRNA"/>
</dbReference>
<dbReference type="EMBL" id="AK314036">
    <property type="protein sequence ID" value="BAG36746.1"/>
    <property type="molecule type" value="mRNA"/>
</dbReference>
<dbReference type="EMBL" id="CH471076">
    <property type="protein sequence ID" value="EAW75114.1"/>
    <property type="molecule type" value="Genomic_DNA"/>
</dbReference>
<dbReference type="EMBL" id="BC040280">
    <property type="protein sequence ID" value="AAH40280.1"/>
    <property type="molecule type" value="mRNA"/>
</dbReference>
<dbReference type="CCDS" id="CCDS66196.1">
    <molecule id="Q8IWF9-1"/>
</dbReference>
<dbReference type="CCDS" id="CCDS8271.1">
    <molecule id="Q8IWF9-2"/>
</dbReference>
<dbReference type="RefSeq" id="NP_001273088.1">
    <molecule id="Q8IWF9-1"/>
    <property type="nucleotide sequence ID" value="NM_001286159.2"/>
</dbReference>
<dbReference type="RefSeq" id="NP_775827.2">
    <molecule id="Q8IWF9-2"/>
    <property type="nucleotide sequence ID" value="NM_173556.4"/>
</dbReference>
<dbReference type="RefSeq" id="XP_011543141.1">
    <molecule id="Q8IWF9-2"/>
    <property type="nucleotide sequence ID" value="XM_011544839.3"/>
</dbReference>
<dbReference type="RefSeq" id="XP_011543142.1">
    <molecule id="Q8IWF9-2"/>
    <property type="nucleotide sequence ID" value="XM_011544840.3"/>
</dbReference>
<dbReference type="RefSeq" id="XP_011543143.1">
    <molecule id="Q8IWF9-2"/>
    <property type="nucleotide sequence ID" value="XM_011544841.2"/>
</dbReference>
<dbReference type="RefSeq" id="XP_054224000.1">
    <molecule id="Q8IWF9-2"/>
    <property type="nucleotide sequence ID" value="XM_054368025.1"/>
</dbReference>
<dbReference type="RefSeq" id="XP_054224001.1">
    <molecule id="Q8IWF9-2"/>
    <property type="nucleotide sequence ID" value="XM_054368026.1"/>
</dbReference>
<dbReference type="RefSeq" id="XP_054224002.1">
    <molecule id="Q8IWF9-2"/>
    <property type="nucleotide sequence ID" value="XM_054368027.1"/>
</dbReference>
<dbReference type="SMR" id="Q8IWF9"/>
<dbReference type="BioGRID" id="128621">
    <property type="interactions" value="12"/>
</dbReference>
<dbReference type="FunCoup" id="Q8IWF9">
    <property type="interactions" value="14"/>
</dbReference>
<dbReference type="IntAct" id="Q8IWF9">
    <property type="interactions" value="9"/>
</dbReference>
<dbReference type="STRING" id="9606.ENSP00000280245"/>
<dbReference type="GlyGen" id="Q8IWF9">
    <property type="glycosylation" value="1 site, 1 O-linked glycan (1 site)"/>
</dbReference>
<dbReference type="iPTMnet" id="Q8IWF9"/>
<dbReference type="PhosphoSitePlus" id="Q8IWF9"/>
<dbReference type="BioMuta" id="CCDC83"/>
<dbReference type="DMDM" id="148841313"/>
<dbReference type="MassIVE" id="Q8IWF9"/>
<dbReference type="PaxDb" id="9606-ENSP00000280245"/>
<dbReference type="PeptideAtlas" id="Q8IWF9"/>
<dbReference type="ProteomicsDB" id="70855">
    <molecule id="Q8IWF9-1"/>
</dbReference>
<dbReference type="ProteomicsDB" id="70856">
    <molecule id="Q8IWF9-2"/>
</dbReference>
<dbReference type="ProteomicsDB" id="70857">
    <molecule id="Q8IWF9-3"/>
</dbReference>
<dbReference type="Antibodypedia" id="31411">
    <property type="antibodies" value="147 antibodies from 23 providers"/>
</dbReference>
<dbReference type="DNASU" id="220047"/>
<dbReference type="Ensembl" id="ENST00000280245.8">
    <molecule id="Q8IWF9-2"/>
    <property type="protein sequence ID" value="ENSP00000280245.4"/>
    <property type="gene ID" value="ENSG00000150676.13"/>
</dbReference>
<dbReference type="Ensembl" id="ENST00000342404.8">
    <molecule id="Q8IWF9-1"/>
    <property type="protein sequence ID" value="ENSP00000344512.3"/>
    <property type="gene ID" value="ENSG00000150676.13"/>
</dbReference>
<dbReference type="GeneID" id="220047"/>
<dbReference type="KEGG" id="hsa:220047"/>
<dbReference type="MANE-Select" id="ENST00000342404.8">
    <property type="protein sequence ID" value="ENSP00000344512.3"/>
    <property type="RefSeq nucleotide sequence ID" value="NM_001286159.2"/>
    <property type="RefSeq protein sequence ID" value="NP_001273088.1"/>
</dbReference>
<dbReference type="UCSC" id="uc001pbg.3">
    <molecule id="Q8IWF9-1"/>
    <property type="organism name" value="human"/>
</dbReference>
<dbReference type="AGR" id="HGNC:28535"/>
<dbReference type="CTD" id="220047"/>
<dbReference type="DisGeNET" id="220047"/>
<dbReference type="GeneCards" id="CCDC83"/>
<dbReference type="HGNC" id="HGNC:28535">
    <property type="gene designation" value="CCDC83"/>
</dbReference>
<dbReference type="HPA" id="ENSG00000150676">
    <property type="expression patterns" value="Tissue enriched (testis)"/>
</dbReference>
<dbReference type="neXtProt" id="NX_Q8IWF9"/>
<dbReference type="OpenTargets" id="ENSG00000150676"/>
<dbReference type="PharmGKB" id="PA144596450"/>
<dbReference type="VEuPathDB" id="HostDB:ENSG00000150676"/>
<dbReference type="eggNOG" id="ENOG502QS0V">
    <property type="taxonomic scope" value="Eukaryota"/>
</dbReference>
<dbReference type="GeneTree" id="ENSGT00390000013087"/>
<dbReference type="HOGENOM" id="CLU_049886_0_0_1"/>
<dbReference type="InParanoid" id="Q8IWF9"/>
<dbReference type="OMA" id="DMRIQIS"/>
<dbReference type="OrthoDB" id="10005859at2759"/>
<dbReference type="PAN-GO" id="Q8IWF9">
    <property type="GO annotations" value="0 GO annotations based on evolutionary models"/>
</dbReference>
<dbReference type="PhylomeDB" id="Q8IWF9"/>
<dbReference type="TreeFam" id="TF329512"/>
<dbReference type="PathwayCommons" id="Q8IWF9"/>
<dbReference type="SignaLink" id="Q8IWF9"/>
<dbReference type="BioGRID-ORCS" id="220047">
    <property type="hits" value="9 hits in 1141 CRISPR screens"/>
</dbReference>
<dbReference type="ChiTaRS" id="CCDC83">
    <property type="organism name" value="human"/>
</dbReference>
<dbReference type="GenomeRNAi" id="220047"/>
<dbReference type="Pharos" id="Q8IWF9">
    <property type="development level" value="Tdark"/>
</dbReference>
<dbReference type="PRO" id="PR:Q8IWF9"/>
<dbReference type="Proteomes" id="UP000005640">
    <property type="component" value="Chromosome 11"/>
</dbReference>
<dbReference type="RNAct" id="Q8IWF9">
    <property type="molecule type" value="protein"/>
</dbReference>
<dbReference type="Bgee" id="ENSG00000150676">
    <property type="expression patterns" value="Expressed in sperm and 40 other cell types or tissues"/>
</dbReference>
<dbReference type="ExpressionAtlas" id="Q8IWF9">
    <property type="expression patterns" value="baseline and differential"/>
</dbReference>
<dbReference type="InterPro" id="IPR026702">
    <property type="entry name" value="CCDC83"/>
</dbReference>
<dbReference type="PANTHER" id="PTHR21468:SF1">
    <property type="entry name" value="COILED-COIL DOMAIN-CONTAINING PROTEIN 83"/>
    <property type="match status" value="1"/>
</dbReference>
<dbReference type="PANTHER" id="PTHR21468">
    <property type="entry name" value="HSD9"/>
    <property type="match status" value="1"/>
</dbReference>
<evidence type="ECO:0000255" key="1"/>
<evidence type="ECO:0000256" key="2">
    <source>
        <dbReference type="SAM" id="MobiDB-lite"/>
    </source>
</evidence>
<evidence type="ECO:0000303" key="3">
    <source>
    </source>
</evidence>
<evidence type="ECO:0000303" key="4">
    <source ref="1"/>
</evidence>
<evidence type="ECO:0000305" key="5"/>